<evidence type="ECO:0000250" key="1">
    <source>
        <dbReference type="UniProtKB" id="P04406"/>
    </source>
</evidence>
<evidence type="ECO:0000250" key="2">
    <source>
        <dbReference type="UniProtKB" id="P04797"/>
    </source>
</evidence>
<evidence type="ECO:0000250" key="3">
    <source>
        <dbReference type="UniProtKB" id="P10096"/>
    </source>
</evidence>
<evidence type="ECO:0000250" key="4">
    <source>
        <dbReference type="UniProtKB" id="P16858"/>
    </source>
</evidence>
<evidence type="ECO:0000250" key="5">
    <source>
        <dbReference type="UniProtKB" id="P22513"/>
    </source>
</evidence>
<evidence type="ECO:0000255" key="6">
    <source>
        <dbReference type="PROSITE-ProRule" id="PRU10009"/>
    </source>
</evidence>
<evidence type="ECO:0000305" key="7"/>
<comment type="function">
    <text evidence="1 2">Has both glyceraldehyde-3-phosphate dehydrogenase and nitrosylase activities, thereby playing a role in glycolysis and nuclear functions, respectively. Glyceraldehyde-3-phosphate dehydrogenase is a key enzyme in glycolysis that catalyzes the first step of the pathway by converting D-glyceraldehyde 3-phosphate (G3P) into 3-phospho-D-glyceroyl phosphate (By similarity). Modulates the organization and assembly of the cytoskeleton. Facilitates the CHP1-dependent microtubule and membrane associations through its ability to stimulate the binding of CHP1 to microtubules (By similarity). Component of the GAIT (gamma interferon-activated inhibitor of translation) complex which mediates interferon-gamma-induced transcript-selective translation inhibition in inflammation processes. Upon interferon-gamma treatment assembles into the GAIT complex which binds to stem loop-containing GAIT elements in the 3'-UTR of diverse inflammatory mRNAs (such as ceruplasmin) and suppresses their translation. Also plays a role in innate immunity by promoting TNF-induced NF-kappa-B activation and type I interferon production, via interaction with TRAF2 and TRAF3, respectively (By similarity). Participates in nuclear events including transcription, RNA transport, DNA replication and apoptosis. Nuclear functions are probably due to the nitrosylase activity that mediates cysteine S-nitrosylation of nuclear target proteins such as SIRT1, HDAC2 and PRKDC (By similarity).</text>
</comment>
<comment type="catalytic activity">
    <reaction evidence="1 6">
        <text>D-glyceraldehyde 3-phosphate + phosphate + NAD(+) = (2R)-3-phospho-glyceroyl phosphate + NADH + H(+)</text>
        <dbReference type="Rhea" id="RHEA:10300"/>
        <dbReference type="ChEBI" id="CHEBI:15378"/>
        <dbReference type="ChEBI" id="CHEBI:43474"/>
        <dbReference type="ChEBI" id="CHEBI:57540"/>
        <dbReference type="ChEBI" id="CHEBI:57604"/>
        <dbReference type="ChEBI" id="CHEBI:57945"/>
        <dbReference type="ChEBI" id="CHEBI:59776"/>
        <dbReference type="EC" id="1.2.1.12"/>
    </reaction>
</comment>
<comment type="catalytic activity">
    <reaction evidence="2">
        <text>S-nitroso-L-cysteinyl-[GAPDH] + L-cysteinyl-[protein] = L-cysteinyl-[GAPDH] + S-nitroso-L-cysteinyl-[protein]</text>
        <dbReference type="Rhea" id="RHEA:66684"/>
        <dbReference type="Rhea" id="RHEA-COMP:10131"/>
        <dbReference type="Rhea" id="RHEA-COMP:17089"/>
        <dbReference type="Rhea" id="RHEA-COMP:17090"/>
        <dbReference type="Rhea" id="RHEA-COMP:17091"/>
        <dbReference type="ChEBI" id="CHEBI:29950"/>
        <dbReference type="ChEBI" id="CHEBI:149494"/>
    </reaction>
    <physiologicalReaction direction="left-to-right" evidence="2">
        <dbReference type="Rhea" id="RHEA:66685"/>
    </physiologicalReaction>
</comment>
<comment type="activity regulation">
    <text evidence="2">Glyceraldehyde-3-phosphate dehydrogenase activity is inhibited by fumarate, via the formation of S-(2-succinyl)cysteine residues.</text>
</comment>
<comment type="pathway">
    <text>Carbohydrate degradation; glycolysis; pyruvate from D-glyceraldehyde 3-phosphate: step 1/5.</text>
</comment>
<comment type="subunit">
    <text evidence="1 2 3">Homotetramer (By similarity). Interacts with TPPP; the interaction is direct (By similarity). Interacts (when S-nitrosylated) with SIAH1; leading to nuclear translocation. Interacts with RILPL1/GOSPEL, leading to prevent the interaction between GAPDH and SIAH1 and prevent nuclear translocation. Interacts with CHP1; the interaction increases the binding of CHP1 with microtubules. Associates with microtubules (By similarity). Interacts with EIF1AD, USP25, PRKCI and WARS1. Interacts with phosphorylated RPL13A; inhibited by oxidatively-modified low-densitity lipoprotein (LDL(ox)). Component of the GAIT complex. Interacts with FKBP6; leading to inhibit GAPDH catalytic activity. Interacts with TRAF2, promoting TRAF2 ubiquitination. Interacts with TRAF3, promoting TRAF3 ubiquitination (By similarity).</text>
</comment>
<comment type="subcellular location">
    <subcellularLocation>
        <location evidence="2">Cytoplasm</location>
        <location evidence="2">Cytosol</location>
    </subcellularLocation>
    <subcellularLocation>
        <location evidence="2">Cytoplasm</location>
        <location evidence="2">Cytoskeleton</location>
    </subcellularLocation>
    <subcellularLocation>
        <location evidence="2">Nucleus</location>
    </subcellularLocation>
    <text evidence="2">Translocates to the nucleus following S-nitrosylation and interaction with SIAH1, which contains a nuclear localization signal. Colocalizes with CHP1 to small punctate structures along the microtubules tracks.</text>
</comment>
<comment type="domain">
    <text evidence="1">The [IL]-x-C-x-x-[DE] motif is a proposed target motif for cysteine S-nitrosylation mediated by the iNOS-S100A8/A9 transnitrosylase complex.</text>
</comment>
<comment type="PTM">
    <text evidence="1">ISGylated.</text>
</comment>
<comment type="PTM">
    <text evidence="1 2">S-nitrosylation of Cys-140 leads to interaction with SIAH1, followed by translocation to the nucleus S-nitrosylation of Cys-235 is induced by interferon-gamma and LDL(ox) implicating the iNOS-S100A8/9 transnitrosylase complex and seems to prevent interaction with phosphorylated RPL13A and to interfere with GAIT complex activity (By similarity).</text>
</comment>
<comment type="PTM">
    <text evidence="4">Sulfhydration at Cys-150 increases catalytic activity.</text>
</comment>
<comment type="PTM">
    <text evidence="1">Oxidative stress can promote the formation of high molecular weight disulfide-linked GAPDH aggregates, through a process called nucleocytoplasmic coagulation.</text>
</comment>
<comment type="similarity">
    <text evidence="7">Belongs to the glyceraldehyde-3-phosphate dehydrogenase family.</text>
</comment>
<accession>P51640</accession>
<dbReference type="EC" id="1.2.1.12" evidence="1"/>
<dbReference type="EC" id="2.6.99.-" evidence="2"/>
<dbReference type="EMBL" id="U10983">
    <property type="protein sequence ID" value="AAA88860.1"/>
    <property type="molecule type" value="mRNA"/>
</dbReference>
<dbReference type="SMR" id="P51640"/>
<dbReference type="STRING" id="10036.ENSMAUP00000014693"/>
<dbReference type="UniPathway" id="UPA00109">
    <property type="reaction ID" value="UER00184"/>
</dbReference>
<dbReference type="Proteomes" id="UP000189706">
    <property type="component" value="Unplaced"/>
</dbReference>
<dbReference type="GO" id="GO:0005737">
    <property type="term" value="C:cytoplasm"/>
    <property type="evidence" value="ECO:0000250"/>
    <property type="project" value="UniProtKB"/>
</dbReference>
<dbReference type="GO" id="GO:0005829">
    <property type="term" value="C:cytosol"/>
    <property type="evidence" value="ECO:0000250"/>
    <property type="project" value="UniProtKB"/>
</dbReference>
<dbReference type="GO" id="GO:0097452">
    <property type="term" value="C:GAIT complex"/>
    <property type="evidence" value="ECO:0000250"/>
    <property type="project" value="UniProtKB"/>
</dbReference>
<dbReference type="GO" id="GO:0015630">
    <property type="term" value="C:microtubule cytoskeleton"/>
    <property type="evidence" value="ECO:0000250"/>
    <property type="project" value="UniProtKB"/>
</dbReference>
<dbReference type="GO" id="GO:0005634">
    <property type="term" value="C:nucleus"/>
    <property type="evidence" value="ECO:0000250"/>
    <property type="project" value="UniProtKB"/>
</dbReference>
<dbReference type="GO" id="GO:0004365">
    <property type="term" value="F:glyceraldehyde-3-phosphate dehydrogenase (NAD+) (phosphorylating) activity"/>
    <property type="evidence" value="ECO:0000250"/>
    <property type="project" value="UniProtKB"/>
</dbReference>
<dbReference type="GO" id="GO:0008017">
    <property type="term" value="F:microtubule binding"/>
    <property type="evidence" value="ECO:0000250"/>
    <property type="project" value="UniProtKB"/>
</dbReference>
<dbReference type="GO" id="GO:0051287">
    <property type="term" value="F:NAD binding"/>
    <property type="evidence" value="ECO:0007669"/>
    <property type="project" value="InterPro"/>
</dbReference>
<dbReference type="GO" id="GO:0050661">
    <property type="term" value="F:NADP binding"/>
    <property type="evidence" value="ECO:0007669"/>
    <property type="project" value="InterPro"/>
</dbReference>
<dbReference type="GO" id="GO:0035605">
    <property type="term" value="F:peptidyl-cysteine S-nitrosylase activity"/>
    <property type="evidence" value="ECO:0000250"/>
    <property type="project" value="UniProtKB"/>
</dbReference>
<dbReference type="GO" id="GO:0006006">
    <property type="term" value="P:glucose metabolic process"/>
    <property type="evidence" value="ECO:0007669"/>
    <property type="project" value="InterPro"/>
</dbReference>
<dbReference type="GO" id="GO:0006096">
    <property type="term" value="P:glycolytic process"/>
    <property type="evidence" value="ECO:0007669"/>
    <property type="project" value="UniProtKB-UniPathway"/>
</dbReference>
<dbReference type="GO" id="GO:0045087">
    <property type="term" value="P:innate immune response"/>
    <property type="evidence" value="ECO:0007669"/>
    <property type="project" value="UniProtKB-KW"/>
</dbReference>
<dbReference type="GO" id="GO:0000226">
    <property type="term" value="P:microtubule cytoskeleton organization"/>
    <property type="evidence" value="ECO:0000250"/>
    <property type="project" value="UniProtKB"/>
</dbReference>
<dbReference type="GO" id="GO:0051402">
    <property type="term" value="P:neuron apoptotic process"/>
    <property type="evidence" value="ECO:0000250"/>
    <property type="project" value="UniProtKB"/>
</dbReference>
<dbReference type="GO" id="GO:0035606">
    <property type="term" value="P:peptidyl-cysteine S-trans-nitrosylation"/>
    <property type="evidence" value="ECO:0000250"/>
    <property type="project" value="UniProtKB"/>
</dbReference>
<dbReference type="GO" id="GO:0043123">
    <property type="term" value="P:positive regulation of canonical NF-kappaB signal transduction"/>
    <property type="evidence" value="ECO:0000250"/>
    <property type="project" value="UniProtKB"/>
</dbReference>
<dbReference type="GO" id="GO:0032481">
    <property type="term" value="P:positive regulation of type I interferon production"/>
    <property type="evidence" value="ECO:0000250"/>
    <property type="project" value="UniProtKB"/>
</dbReference>
<dbReference type="GO" id="GO:0050821">
    <property type="term" value="P:protein stabilization"/>
    <property type="evidence" value="ECO:0000250"/>
    <property type="project" value="UniProtKB"/>
</dbReference>
<dbReference type="GO" id="GO:0006417">
    <property type="term" value="P:regulation of translation"/>
    <property type="evidence" value="ECO:0007669"/>
    <property type="project" value="UniProtKB-KW"/>
</dbReference>
<dbReference type="CDD" id="cd18126">
    <property type="entry name" value="GAPDH_I_C"/>
    <property type="match status" value="1"/>
</dbReference>
<dbReference type="CDD" id="cd05214">
    <property type="entry name" value="GAPDH_I_N"/>
    <property type="match status" value="1"/>
</dbReference>
<dbReference type="FunFam" id="3.30.360.10:FF:000001">
    <property type="entry name" value="Glyceraldehyde-3-phosphate dehydrogenase"/>
    <property type="match status" value="1"/>
</dbReference>
<dbReference type="FunFam" id="3.40.50.720:FF:001161">
    <property type="entry name" value="Glyceraldehyde-3-phosphate dehydrogenase"/>
    <property type="match status" value="1"/>
</dbReference>
<dbReference type="Gene3D" id="3.30.360.10">
    <property type="entry name" value="Dihydrodipicolinate Reductase, domain 2"/>
    <property type="match status" value="1"/>
</dbReference>
<dbReference type="Gene3D" id="3.40.50.720">
    <property type="entry name" value="NAD(P)-binding Rossmann-like Domain"/>
    <property type="match status" value="1"/>
</dbReference>
<dbReference type="InterPro" id="IPR020831">
    <property type="entry name" value="GlycerAld/Erythrose_P_DH"/>
</dbReference>
<dbReference type="InterPro" id="IPR020830">
    <property type="entry name" value="GlycerAld_3-P_DH_AS"/>
</dbReference>
<dbReference type="InterPro" id="IPR020829">
    <property type="entry name" value="GlycerAld_3-P_DH_cat"/>
</dbReference>
<dbReference type="InterPro" id="IPR020828">
    <property type="entry name" value="GlycerAld_3-P_DH_NAD(P)-bd"/>
</dbReference>
<dbReference type="InterPro" id="IPR006424">
    <property type="entry name" value="Glyceraldehyde-3-P_DH_1"/>
</dbReference>
<dbReference type="InterPro" id="IPR036291">
    <property type="entry name" value="NAD(P)-bd_dom_sf"/>
</dbReference>
<dbReference type="NCBIfam" id="TIGR01534">
    <property type="entry name" value="GAPDH-I"/>
    <property type="match status" value="1"/>
</dbReference>
<dbReference type="PANTHER" id="PTHR10836">
    <property type="entry name" value="GLYCERALDEHYDE 3-PHOSPHATE DEHYDROGENASE"/>
    <property type="match status" value="1"/>
</dbReference>
<dbReference type="PANTHER" id="PTHR10836:SF111">
    <property type="entry name" value="GLYCERALDEHYDE-3-PHOSPHATE DEHYDROGENASE"/>
    <property type="match status" value="1"/>
</dbReference>
<dbReference type="Pfam" id="PF02800">
    <property type="entry name" value="Gp_dh_C"/>
    <property type="match status" value="1"/>
</dbReference>
<dbReference type="Pfam" id="PF00044">
    <property type="entry name" value="Gp_dh_N"/>
    <property type="match status" value="1"/>
</dbReference>
<dbReference type="PIRSF" id="PIRSF000149">
    <property type="entry name" value="GAP_DH"/>
    <property type="match status" value="1"/>
</dbReference>
<dbReference type="PRINTS" id="PR00078">
    <property type="entry name" value="G3PDHDRGNASE"/>
</dbReference>
<dbReference type="SMART" id="SM00846">
    <property type="entry name" value="Gp_dh_N"/>
    <property type="match status" value="1"/>
</dbReference>
<dbReference type="SUPFAM" id="SSF55347">
    <property type="entry name" value="Glyceraldehyde-3-phosphate dehydrogenase-like, C-terminal domain"/>
    <property type="match status" value="1"/>
</dbReference>
<dbReference type="SUPFAM" id="SSF51735">
    <property type="entry name" value="NAD(P)-binding Rossmann-fold domains"/>
    <property type="match status" value="1"/>
</dbReference>
<dbReference type="PROSITE" id="PS00071">
    <property type="entry name" value="GAPDH"/>
    <property type="match status" value="1"/>
</dbReference>
<sequence>RIGRLVTRAAFTSGKVDIVAINDPFIDLNYMVYMFQYDSTHGKFKGTVKAENGKLVINGKAITIFQERDPTNIKWGDAGAEYVVESTGVFTTMEKAGAHLKGGAKRVIISAPSADAPMFVMGVNHDKYDNSLKIVSNASCTTTCLAPLAKVIHDNFGIVKGLMTTVHAITATQKTVDGPSGKLWRDGRGAAQNIIPASTGAAKAVGKVIPELNGKLTGMAFRVPTPNVSVVDLTCRLEKAAKYEDIKKVVKQASEGPLKGILGYTEDQVVSCDFKSDSHSSTFDAGAGIALNDNFVKLISWYDNEFGYSNRV</sequence>
<gene>
    <name type="primary">GAPDH</name>
    <name type="synonym">G3PDH</name>
    <name type="synonym">GAPD</name>
</gene>
<keyword id="KW-0007">Acetylation</keyword>
<keyword id="KW-0013">ADP-ribosylation</keyword>
<keyword id="KW-0053">Apoptosis</keyword>
<keyword id="KW-0963">Cytoplasm</keyword>
<keyword id="KW-0206">Cytoskeleton</keyword>
<keyword id="KW-0324">Glycolysis</keyword>
<keyword id="KW-0391">Immunity</keyword>
<keyword id="KW-0399">Innate immunity</keyword>
<keyword id="KW-1017">Isopeptide bond</keyword>
<keyword id="KW-0488">Methylation</keyword>
<keyword id="KW-0520">NAD</keyword>
<keyword id="KW-0539">Nucleus</keyword>
<keyword id="KW-0560">Oxidoreductase</keyword>
<keyword id="KW-0597">Phosphoprotein</keyword>
<keyword id="KW-1185">Reference proteome</keyword>
<keyword id="KW-0702">S-nitrosylation</keyword>
<keyword id="KW-0808">Transferase</keyword>
<keyword id="KW-0810">Translation regulation</keyword>
<keyword id="KW-0832">Ubl conjugation</keyword>
<reference key="1">
    <citation type="journal article" date="1995" name="Cancer Res.">
        <title>Multiple genetic alterations in hamster pancreatic ductal adenocarcinomas.</title>
        <authorList>
            <person name="Chang K.W."/>
            <person name="Laconi S."/>
            <person name="Mangold K.A."/>
            <person name="Hubchak S."/>
            <person name="Scarpelli D.G."/>
        </authorList>
    </citation>
    <scope>NUCLEOTIDE SEQUENCE [MRNA]</scope>
    <source>
        <tissue>Pancreas</tissue>
    </source>
</reference>
<feature type="chain" id="PRO_0000145489" description="Glyceraldehyde-3-phosphate dehydrogenase">
    <location>
        <begin position="1" status="less than"/>
        <end position="312" status="greater than"/>
    </location>
</feature>
<feature type="short sequence motif" description="[IL]-x-C-x-x-[DE] motif" evidence="1">
    <location>
        <begin position="233"/>
        <end position="238"/>
    </location>
</feature>
<feature type="active site" description="Nucleophile" evidence="6">
    <location>
        <position position="140"/>
    </location>
</feature>
<feature type="binding site" evidence="1">
    <location>
        <begin position="1"/>
        <end position="2"/>
    </location>
    <ligand>
        <name>NAD(+)</name>
        <dbReference type="ChEBI" id="CHEBI:57540"/>
    </ligand>
</feature>
<feature type="binding site" evidence="1">
    <location>
        <position position="23"/>
    </location>
    <ligand>
        <name>NAD(+)</name>
        <dbReference type="ChEBI" id="CHEBI:57540"/>
    </ligand>
</feature>
<feature type="binding site" evidence="1">
    <location>
        <position position="68"/>
    </location>
    <ligand>
        <name>NAD(+)</name>
        <dbReference type="ChEBI" id="CHEBI:57540"/>
    </ligand>
</feature>
<feature type="binding site" evidence="1">
    <location>
        <position position="110"/>
    </location>
    <ligand>
        <name>NAD(+)</name>
        <dbReference type="ChEBI" id="CHEBI:57540"/>
    </ligand>
</feature>
<feature type="binding site" evidence="5">
    <location>
        <begin position="139"/>
        <end position="141"/>
    </location>
    <ligand>
        <name>D-glyceraldehyde 3-phosphate</name>
        <dbReference type="ChEBI" id="CHEBI:59776"/>
    </ligand>
</feature>
<feature type="binding site" evidence="5">
    <location>
        <position position="170"/>
    </location>
    <ligand>
        <name>D-glyceraldehyde 3-phosphate</name>
        <dbReference type="ChEBI" id="CHEBI:59776"/>
    </ligand>
</feature>
<feature type="binding site" evidence="5">
    <location>
        <begin position="199"/>
        <end position="200"/>
    </location>
    <ligand>
        <name>D-glyceraldehyde 3-phosphate</name>
        <dbReference type="ChEBI" id="CHEBI:59776"/>
    </ligand>
</feature>
<feature type="binding site" evidence="5">
    <location>
        <position position="222"/>
    </location>
    <ligand>
        <name>D-glyceraldehyde 3-phosphate</name>
        <dbReference type="ChEBI" id="CHEBI:59776"/>
    </ligand>
</feature>
<feature type="binding site" evidence="1">
    <location>
        <position position="304"/>
    </location>
    <ligand>
        <name>NAD(+)</name>
        <dbReference type="ChEBI" id="CHEBI:57540"/>
    </ligand>
</feature>
<feature type="site" description="Activates thiol group during catalysis" evidence="1">
    <location>
        <position position="167"/>
    </location>
</feature>
<feature type="modified residue" description="Phosphotyrosine" evidence="1">
    <location>
        <position position="30"/>
    </location>
</feature>
<feature type="modified residue" description="N6-acetyllysine" evidence="1">
    <location>
        <position position="49"/>
    </location>
</feature>
<feature type="modified residue" description="Deamidated asparagine" evidence="1">
    <location>
        <position position="52"/>
    </location>
</feature>
<feature type="modified residue" description="N6,N6-dimethyllysine" evidence="1">
    <location>
        <position position="54"/>
    </location>
</feature>
<feature type="modified residue" description="Deamidated asparagine" evidence="1">
    <location>
        <position position="58"/>
    </location>
</feature>
<feature type="modified residue" description="Phosphothreonine" evidence="1">
    <location>
        <position position="63"/>
    </location>
</feature>
<feature type="modified residue" description="Phosphoserine" evidence="1">
    <location>
        <position position="110"/>
    </location>
</feature>
<feature type="modified residue" description="Phosphoserine" evidence="1">
    <location>
        <position position="136"/>
    </location>
</feature>
<feature type="modified residue" description="Deamidated asparagine" evidence="1">
    <location>
        <position position="137"/>
    </location>
</feature>
<feature type="modified residue" description="Phosphoserine" evidence="1">
    <location>
        <position position="139"/>
    </location>
</feature>
<feature type="modified residue" description="ADP-ribosylcysteine; by autocatalysis; in irreversibly inhibited form" evidence="2">
    <location>
        <position position="140"/>
    </location>
</feature>
<feature type="modified residue" description="Cysteine persulfide" evidence="4">
    <location>
        <position position="140"/>
    </location>
</feature>
<feature type="modified residue" description="S-(2-succinyl)cysteine" evidence="2">
    <location>
        <position position="140"/>
    </location>
</feature>
<feature type="modified residue" description="S-nitrosocysteine; in reversibly inhibited form" evidence="2">
    <location>
        <position position="140"/>
    </location>
</feature>
<feature type="modified residue" description="Phosphothreonine" evidence="1">
    <location>
        <position position="141"/>
    </location>
</feature>
<feature type="modified residue" description="Phosphothreonine" evidence="1">
    <location>
        <position position="165"/>
    </location>
</feature>
<feature type="modified residue" description="Phosphothreonine" evidence="1">
    <location>
        <position position="170"/>
    </location>
</feature>
<feature type="modified residue" description="Phosphothreonine" evidence="1">
    <location>
        <position position="172"/>
    </location>
</feature>
<feature type="modified residue" description="N6,N6-dimethyllysine; alternate" evidence="1">
    <location>
        <position position="182"/>
    </location>
</feature>
<feature type="modified residue" description="N6-acetyllysine; alternate" evidence="1">
    <location>
        <position position="182"/>
    </location>
</feature>
<feature type="modified residue" description="N6-malonyllysine; alternate" evidence="1">
    <location>
        <position position="182"/>
    </location>
</feature>
<feature type="modified residue" description="Phosphothreonine" evidence="1">
    <location>
        <position position="199"/>
    </location>
</feature>
<feature type="modified residue" description="N6,N6-dimethyllysine; alternate" evidence="1">
    <location>
        <position position="203"/>
    </location>
</feature>
<feature type="modified residue" description="N6-malonyllysine; alternate" evidence="1">
    <location>
        <position position="203"/>
    </location>
</feature>
<feature type="modified residue" description="N6-acetyllysine" evidence="1">
    <location>
        <position position="207"/>
    </location>
</feature>
<feature type="modified residue" description="Deamidated asparagine" evidence="1">
    <location>
        <position position="213"/>
    </location>
</feature>
<feature type="modified residue" description="N6,N6-dimethyllysine; alternate" evidence="1">
    <location>
        <position position="215"/>
    </location>
</feature>
<feature type="modified residue" description="N6-acetyllysine; alternate" evidence="1">
    <location>
        <position position="215"/>
    </location>
</feature>
<feature type="modified residue" description="Phosphothreonine" evidence="1">
    <location>
        <position position="217"/>
    </location>
</feature>
<feature type="modified residue" description="Phosphothreonine" evidence="1">
    <location>
        <position position="225"/>
    </location>
</feature>
<feature type="modified residue" description="Phosphoserine" evidence="1">
    <location>
        <position position="229"/>
    </location>
</feature>
<feature type="modified residue" description="S-(2-succinyl)cysteine" evidence="2">
    <location>
        <position position="235"/>
    </location>
</feature>
<feature type="modified residue" description="S-nitrosocysteine" evidence="1">
    <location>
        <position position="235"/>
    </location>
</feature>
<feature type="modified residue" description="N6-acetyllysine" evidence="1">
    <location>
        <position position="242"/>
    </location>
</feature>
<feature type="modified residue" description="N6,N6-dimethyllysine" evidence="1">
    <location>
        <position position="248"/>
    </location>
</feature>
<feature type="modified residue" description="N6,N6-dimethyllysine" evidence="1">
    <location>
        <position position="251"/>
    </location>
</feature>
<feature type="modified residue" description="Phosphoserine" evidence="1">
    <location>
        <position position="300"/>
    </location>
</feature>
<feature type="modified residue" description="Deamidated asparagine" evidence="1">
    <location>
        <position position="304"/>
    </location>
</feature>
<feature type="cross-link" description="Glycyl lysine isopeptide (Lys-Gly) (interchain with G-Cter in SUMO2)" evidence="1">
    <location>
        <position position="174"/>
    </location>
</feature>
<feature type="non-terminal residue">
    <location>
        <position position="1"/>
    </location>
</feature>
<feature type="non-terminal residue">
    <location>
        <position position="312"/>
    </location>
</feature>
<organism>
    <name type="scientific">Mesocricetus auratus</name>
    <name type="common">Golden hamster</name>
    <dbReference type="NCBI Taxonomy" id="10036"/>
    <lineage>
        <taxon>Eukaryota</taxon>
        <taxon>Metazoa</taxon>
        <taxon>Chordata</taxon>
        <taxon>Craniata</taxon>
        <taxon>Vertebrata</taxon>
        <taxon>Euteleostomi</taxon>
        <taxon>Mammalia</taxon>
        <taxon>Eutheria</taxon>
        <taxon>Euarchontoglires</taxon>
        <taxon>Glires</taxon>
        <taxon>Rodentia</taxon>
        <taxon>Myomorpha</taxon>
        <taxon>Muroidea</taxon>
        <taxon>Cricetidae</taxon>
        <taxon>Cricetinae</taxon>
        <taxon>Mesocricetus</taxon>
    </lineage>
</organism>
<name>G3P_MESAU</name>
<protein>
    <recommendedName>
        <fullName>Glyceraldehyde-3-phosphate dehydrogenase</fullName>
        <shortName>GAPDH</shortName>
        <ecNumber evidence="1">1.2.1.12</ecNumber>
    </recommendedName>
    <alternativeName>
        <fullName evidence="7">Peptidyl-cysteine S-nitrosylase GAPDH</fullName>
        <ecNumber evidence="2">2.6.99.-</ecNumber>
    </alternativeName>
</protein>
<proteinExistence type="evidence at transcript level"/>